<sequence length="859" mass="94221">MYILVWKKGQQIKTFHTLDEAAQFKAASNIDEAQMFSVTVAPAISASGGSNEATNLRRLMYLSKSTNPEECNPQFLAEMARVATIRNREIGVSGFLMYSSPFFFQVIEGTDEDLDFLFAKISADPRHERCIVLANGPCTGRMYGDWHMKDSHMDSITTHPAMKTILYQIARSFSSMWSYLPKSAGNMLLLGKDPAAQPPEPMSVVVTFIYLVEFGSILSNPNLTEQAAEVLSTFVDVCVKNVEGSGGNIAKFITGICMAYWPINRTEEALTAIQQISEDLAQLRSQQAPGSAVSLMYSQAGVHYGRAMLCNAGSRKSDFTLLGDCINTTSRIATLAKKLKTPLLFSFEVRCLLGDEMREEIEGAGMHQVKGRDKPVVVYQFPGPELDVEMVRQKIEQFTPGRFRCQMPVVEYEALPISQRPPIFDDTPKGNPRPRTPGYGGRQRSDSLVDRLIMIAKLAGPSVSATGDTTLTTLTYISQATRPMSRLDLSAIMRTATRRNAQQSITGTLLHVNGLFVQTLEGPKDAVVNLYLRIRQDPRHTDVTTVHMAPLQERVYPSEWTLTSATEEMLATFPPLQDVLSQLAKSFTSLETYVPSTVVRYLTAGNNPRNLMPVSCGVVMLATDICSFTSLTEKSSLTEVWMICNTFIDACTSAICQEGGEVIKLIGDCVTAYFPGNNADSAVAAAQELFTFCRQLREAFVDVLDVRGCVSCGVGLDYGQVVMAQCGSLGLTEYVVAGAVSARVMEVEAITREVGYAIVVTEPVADRLSPQLRDHGIVPTPQAIEGLPCYGIAGEEFELDVDSIKRGIKALHAARSGEKPLTEPEEAKPDFRVSPGRVRHGDSGRRSNSAQGKRSIQVR</sequence>
<reference evidence="7 8" key="1">
    <citation type="journal article" date="2002" name="Nature">
        <title>A blue-light-activated adenylyl cyclase mediates photoavoidance in Euglena gracilis.</title>
        <authorList>
            <person name="Iseki M."/>
            <person name="Matsunaga S."/>
            <person name="Murakami A."/>
            <person name="Ohno K."/>
            <person name="Shiga K."/>
            <person name="Yoshida K."/>
            <person name="Sugai M."/>
            <person name="Takahashi T."/>
            <person name="Hori T."/>
            <person name="Watanabe M."/>
        </authorList>
    </citation>
    <scope>NUCLEOTIDE SEQUENCE [MRNA]</scope>
    <scope>PROTEIN SEQUENCE OF 1-32</scope>
    <scope>FUNCTION</scope>
    <scope>CATALYTIC ACTIVITY</scope>
    <scope>COFACTOR</scope>
    <scope>ACTIVITY REGULATION</scope>
    <scope>BIOPHYSICOCHEMICAL PROPERTIES</scope>
    <scope>SUBUNIT</scope>
    <scope>SUBCELLULAR LOCATION</scope>
    <source>
        <strain evidence="8">Z / UTEX 753</strain>
    </source>
</reference>
<reference key="2">
    <citation type="journal article" date="2005" name="Photochem. Photobiol. Sci.">
        <title>Photoactivated adenylyl cyclase (PAC) genes in the flagellate Euglena gracilis mutant strains.</title>
        <authorList>
            <person name="Ntefidou M."/>
            <person name="Haeder D.-P."/>
        </authorList>
    </citation>
    <scope>SUBCELLULAR LOCATION</scope>
</reference>
<proteinExistence type="evidence at protein level"/>
<keyword id="KW-0067">ATP-binding</keyword>
<keyword id="KW-0115">cAMP biosynthesis</keyword>
<keyword id="KW-0966">Cell projection</keyword>
<keyword id="KW-0157">Chromophore</keyword>
<keyword id="KW-0969">Cilium</keyword>
<keyword id="KW-0903">Direct protein sequencing</keyword>
<keyword id="KW-0274">FAD</keyword>
<keyword id="KW-0282">Flagellum</keyword>
<keyword id="KW-0285">Flavoprotein</keyword>
<keyword id="KW-0456">Lyase</keyword>
<keyword id="KW-0547">Nucleotide-binding</keyword>
<keyword id="KW-0600">Photoreceptor protein</keyword>
<keyword id="KW-0675">Receptor</keyword>
<keyword id="KW-0677">Repeat</keyword>
<keyword id="KW-0716">Sensory transduction</keyword>
<accession>Q8S9F1</accession>
<gene>
    <name evidence="6" type="primary">pacB</name>
</gene>
<dbReference type="EC" id="4.6.1.1"/>
<dbReference type="EMBL" id="AB031226">
    <property type="protein sequence ID" value="BAB85620.1"/>
    <property type="molecule type" value="mRNA"/>
</dbReference>
<dbReference type="SMR" id="Q8S9F1"/>
<dbReference type="SABIO-RK" id="Q8S9F1"/>
<dbReference type="GO" id="GO:0031514">
    <property type="term" value="C:motile cilium"/>
    <property type="evidence" value="ECO:0000314"/>
    <property type="project" value="UniProtKB"/>
</dbReference>
<dbReference type="GO" id="GO:0004016">
    <property type="term" value="F:adenylate cyclase activity"/>
    <property type="evidence" value="ECO:0000314"/>
    <property type="project" value="UniProtKB"/>
</dbReference>
<dbReference type="GO" id="GO:0005524">
    <property type="term" value="F:ATP binding"/>
    <property type="evidence" value="ECO:0007669"/>
    <property type="project" value="UniProtKB-KW"/>
</dbReference>
<dbReference type="GO" id="GO:0009882">
    <property type="term" value="F:blue light photoreceptor activity"/>
    <property type="evidence" value="ECO:0007669"/>
    <property type="project" value="InterPro"/>
</dbReference>
<dbReference type="GO" id="GO:0071949">
    <property type="term" value="F:FAD binding"/>
    <property type="evidence" value="ECO:0007669"/>
    <property type="project" value="InterPro"/>
</dbReference>
<dbReference type="GO" id="GO:0009881">
    <property type="term" value="F:photoreceptor activity"/>
    <property type="evidence" value="ECO:0000314"/>
    <property type="project" value="UniProtKB"/>
</dbReference>
<dbReference type="GO" id="GO:0006171">
    <property type="term" value="P:cAMP biosynthetic process"/>
    <property type="evidence" value="ECO:0007669"/>
    <property type="project" value="UniProtKB-KW"/>
</dbReference>
<dbReference type="CDD" id="cd07302">
    <property type="entry name" value="CHD"/>
    <property type="match status" value="2"/>
</dbReference>
<dbReference type="FunFam" id="3.30.70.1230:FF:000065">
    <property type="entry name" value="Photoactivated adenylate cyclase subunit alpha-like protein ST"/>
    <property type="match status" value="1"/>
</dbReference>
<dbReference type="FunFam" id="3.30.70.100:FF:000061">
    <property type="entry name" value="Photoactivated adenylate cyclase subunit beta-like protein 1224-5/1F"/>
    <property type="match status" value="1"/>
</dbReference>
<dbReference type="FunFam" id="3.30.70.1230:FF:000058">
    <property type="entry name" value="Photoactivated adenylate cyclase subunit beta-like protein FB"/>
    <property type="match status" value="1"/>
</dbReference>
<dbReference type="FunFam" id="3.30.70.100:FF:000064">
    <property type="entry name" value="Photoactivated adenylate cyclase subunit beta-like protein ST"/>
    <property type="match status" value="1"/>
</dbReference>
<dbReference type="Gene3D" id="3.30.70.100">
    <property type="match status" value="2"/>
</dbReference>
<dbReference type="Gene3D" id="3.30.70.1230">
    <property type="entry name" value="Nucleotide cyclase"/>
    <property type="match status" value="2"/>
</dbReference>
<dbReference type="InterPro" id="IPR001054">
    <property type="entry name" value="A/G_cyclase"/>
</dbReference>
<dbReference type="InterPro" id="IPR036046">
    <property type="entry name" value="Acylphosphatase-like_dom_sf"/>
</dbReference>
<dbReference type="InterPro" id="IPR050697">
    <property type="entry name" value="Adenylyl/Guanylyl_Cyclase_3/4"/>
</dbReference>
<dbReference type="InterPro" id="IPR007024">
    <property type="entry name" value="BLUF_domain"/>
</dbReference>
<dbReference type="InterPro" id="IPR029787">
    <property type="entry name" value="Nucleotide_cyclase"/>
</dbReference>
<dbReference type="PANTHER" id="PTHR43081:SF1">
    <property type="entry name" value="ADENYLATE CYCLASE, TERMINAL-DIFFERENTIATION SPECIFIC"/>
    <property type="match status" value="1"/>
</dbReference>
<dbReference type="PANTHER" id="PTHR43081">
    <property type="entry name" value="ADENYLATE CYCLASE, TERMINAL-DIFFERENTIATION SPECIFIC-RELATED"/>
    <property type="match status" value="1"/>
</dbReference>
<dbReference type="Pfam" id="PF04940">
    <property type="entry name" value="BLUF"/>
    <property type="match status" value="2"/>
</dbReference>
<dbReference type="SMART" id="SM01034">
    <property type="entry name" value="BLUF"/>
    <property type="match status" value="2"/>
</dbReference>
<dbReference type="SUPFAM" id="SSF54975">
    <property type="entry name" value="Acylphosphatase/BLUF domain-like"/>
    <property type="match status" value="2"/>
</dbReference>
<dbReference type="SUPFAM" id="SSF55073">
    <property type="entry name" value="Nucleotide cyclase"/>
    <property type="match status" value="2"/>
</dbReference>
<dbReference type="PROSITE" id="PS50925">
    <property type="entry name" value="BLUF"/>
    <property type="match status" value="2"/>
</dbReference>
<dbReference type="PROSITE" id="PS50125">
    <property type="entry name" value="GUANYLATE_CYCLASE_2"/>
    <property type="match status" value="2"/>
</dbReference>
<comment type="function">
    <text evidence="4">Acts as a blue light photoreceptor for the step-up photophobic response. Mediates photoavoidance.</text>
</comment>
<comment type="catalytic activity">
    <reaction evidence="4">
        <text>ATP = 3',5'-cyclic AMP + diphosphate</text>
        <dbReference type="Rhea" id="RHEA:15389"/>
        <dbReference type="ChEBI" id="CHEBI:30616"/>
        <dbReference type="ChEBI" id="CHEBI:33019"/>
        <dbReference type="ChEBI" id="CHEBI:58165"/>
        <dbReference type="EC" id="4.6.1.1"/>
    </reaction>
</comment>
<comment type="cofactor">
    <cofactor evidence="4">
        <name>FAD</name>
        <dbReference type="ChEBI" id="CHEBI:57692"/>
    </cofactor>
</comment>
<comment type="activity regulation">
    <text evidence="4">Activity increased by up to 80-fold under blue light.</text>
</comment>
<comment type="biophysicochemical properties">
    <kinetics>
        <KM evidence="4">0.5 uM for ATP</KM>
        <Vmax evidence="4">3.5 nmol/min/mg enzyme</Vmax>
    </kinetics>
</comment>
<comment type="subunit">
    <text evidence="4">Heterotetramer of two alpha and two beta subunits.</text>
</comment>
<comment type="subcellular location">
    <subcellularLocation>
        <location evidence="4 5">Cell projection</location>
        <location evidence="4 5">Cilium</location>
        <location evidence="4 5">Flagellum</location>
    </subcellularLocation>
    <text>Paraflagellar body, flagellum and paraxonemal bodies (PABs).</text>
</comment>
<comment type="similarity">
    <text evidence="2">Belongs to the adenylyl cyclase class-4/guanylyl cyclase family.</text>
</comment>
<name>PCYAB_EUGGR</name>
<feature type="chain" id="PRO_0000195718" description="Photoactivated adenylate cyclase subunit beta">
    <location>
        <begin position="1"/>
        <end position="859"/>
    </location>
</feature>
<feature type="domain" description="BLUF 1" evidence="1">
    <location>
        <begin position="56"/>
        <end position="149"/>
    </location>
</feature>
<feature type="domain" description="Guanylate cyclase 1" evidence="2">
    <location>
        <begin position="205"/>
        <end position="333"/>
    </location>
</feature>
<feature type="domain" description="BLUF 2" evidence="1">
    <location>
        <begin position="471"/>
        <end position="563"/>
    </location>
</feature>
<feature type="domain" description="Guanylate cyclase 2" evidence="2">
    <location>
        <begin position="619"/>
        <end position="748"/>
    </location>
</feature>
<feature type="region of interest" description="Disordered" evidence="3">
    <location>
        <begin position="420"/>
        <end position="443"/>
    </location>
</feature>
<feature type="region of interest" description="Disordered" evidence="3">
    <location>
        <begin position="813"/>
        <end position="859"/>
    </location>
</feature>
<feature type="compositionally biased region" description="Basic and acidic residues" evidence="3">
    <location>
        <begin position="815"/>
        <end position="831"/>
    </location>
</feature>
<feature type="compositionally biased region" description="Polar residues" evidence="3">
    <location>
        <begin position="846"/>
        <end position="859"/>
    </location>
</feature>
<organism>
    <name type="scientific">Euglena gracilis</name>
    <dbReference type="NCBI Taxonomy" id="3039"/>
    <lineage>
        <taxon>Eukaryota</taxon>
        <taxon>Discoba</taxon>
        <taxon>Euglenozoa</taxon>
        <taxon>Euglenida</taxon>
        <taxon>Spirocuta</taxon>
        <taxon>Euglenophyceae</taxon>
        <taxon>Euglenales</taxon>
        <taxon>Euglenaceae</taxon>
        <taxon>Euglena</taxon>
    </lineage>
</organism>
<evidence type="ECO:0000255" key="1">
    <source>
        <dbReference type="PROSITE-ProRule" id="PRU00030"/>
    </source>
</evidence>
<evidence type="ECO:0000255" key="2">
    <source>
        <dbReference type="PROSITE-ProRule" id="PRU00099"/>
    </source>
</evidence>
<evidence type="ECO:0000256" key="3">
    <source>
        <dbReference type="SAM" id="MobiDB-lite"/>
    </source>
</evidence>
<evidence type="ECO:0000269" key="4">
    <source>
    </source>
</evidence>
<evidence type="ECO:0000269" key="5">
    <source>
    </source>
</evidence>
<evidence type="ECO:0000303" key="6">
    <source>
    </source>
</evidence>
<evidence type="ECO:0000305" key="7"/>
<evidence type="ECO:0000312" key="8">
    <source>
        <dbReference type="EMBL" id="BAB85620.1"/>
    </source>
</evidence>
<protein>
    <recommendedName>
        <fullName>Photoactivated adenylate cyclase subunit beta</fullName>
        <ecNumber>4.6.1.1</ecNumber>
    </recommendedName>
    <alternativeName>
        <fullName>Photoactivated adenylyl cyclase subunit beta</fullName>
    </alternativeName>
</protein>